<sequence>MAFNLPRIRNKSEVSNDLMRRNHLDNIFDDFFNEFYTFPYSSSTEKNLIPRTDISETDSGYSLEVELPGINQKDIDINIDNHILTIKGQKEEKSEEKNKNYHMRERYYGSFQRSISLPANINDDAINARFENGILHITIPKKEQGKTRKIEVKG</sequence>
<protein>
    <recommendedName>
        <fullName>Small heat shock protein C2</fullName>
    </recommendedName>
</protein>
<proteinExistence type="inferred from homology"/>
<dbReference type="EMBL" id="CP000053">
    <property type="protein sequence ID" value="AAY61855.1"/>
    <property type="molecule type" value="Genomic_DNA"/>
</dbReference>
<dbReference type="SMR" id="Q4UKR8"/>
<dbReference type="STRING" id="315456.RF_1004"/>
<dbReference type="KEGG" id="rfe:RF_1004"/>
<dbReference type="eggNOG" id="COG0071">
    <property type="taxonomic scope" value="Bacteria"/>
</dbReference>
<dbReference type="HOGENOM" id="CLU_046737_12_0_5"/>
<dbReference type="OrthoDB" id="9808910at2"/>
<dbReference type="Proteomes" id="UP000008548">
    <property type="component" value="Chromosome"/>
</dbReference>
<dbReference type="CDD" id="cd06464">
    <property type="entry name" value="ACD_sHsps-like"/>
    <property type="match status" value="1"/>
</dbReference>
<dbReference type="Gene3D" id="2.60.40.790">
    <property type="match status" value="1"/>
</dbReference>
<dbReference type="InterPro" id="IPR002068">
    <property type="entry name" value="A-crystallin/Hsp20_dom"/>
</dbReference>
<dbReference type="InterPro" id="IPR007052">
    <property type="entry name" value="CS_dom"/>
</dbReference>
<dbReference type="InterPro" id="IPR008978">
    <property type="entry name" value="HSP20-like_chaperone"/>
</dbReference>
<dbReference type="InterPro" id="IPR031107">
    <property type="entry name" value="Small_HSP"/>
</dbReference>
<dbReference type="PANTHER" id="PTHR11527">
    <property type="entry name" value="HEAT-SHOCK PROTEIN 20 FAMILY MEMBER"/>
    <property type="match status" value="1"/>
</dbReference>
<dbReference type="Pfam" id="PF00011">
    <property type="entry name" value="HSP20"/>
    <property type="match status" value="1"/>
</dbReference>
<dbReference type="SUPFAM" id="SSF49764">
    <property type="entry name" value="HSP20-like chaperones"/>
    <property type="match status" value="1"/>
</dbReference>
<dbReference type="PROSITE" id="PS01031">
    <property type="entry name" value="SHSP"/>
    <property type="match status" value="1"/>
</dbReference>
<feature type="chain" id="PRO_0000288741" description="Small heat shock protein C2">
    <location>
        <begin position="1"/>
        <end position="154"/>
    </location>
</feature>
<feature type="domain" description="sHSP" evidence="1">
    <location>
        <begin position="43"/>
        <end position="154"/>
    </location>
</feature>
<comment type="similarity">
    <text evidence="1">Belongs to the small heat shock protein (HSP20) family.</text>
</comment>
<evidence type="ECO:0000255" key="1">
    <source>
        <dbReference type="PROSITE-ProRule" id="PRU00285"/>
    </source>
</evidence>
<gene>
    <name type="primary">hspC2</name>
    <name type="ordered locus">RF_1004</name>
</gene>
<accession>Q4UKR8</accession>
<keyword id="KW-0346">Stress response</keyword>
<name>HSPC2_RICFE</name>
<reference key="1">
    <citation type="journal article" date="2005" name="PLoS Biol.">
        <title>The genome sequence of Rickettsia felis identifies the first putative conjugative plasmid in an obligate intracellular parasite.</title>
        <authorList>
            <person name="Ogata H."/>
            <person name="Renesto P."/>
            <person name="Audic S."/>
            <person name="Robert C."/>
            <person name="Blanc G."/>
            <person name="Fournier P.-E."/>
            <person name="Parinello H."/>
            <person name="Claverie J.-M."/>
            <person name="Raoult D."/>
        </authorList>
    </citation>
    <scope>NUCLEOTIDE SEQUENCE [LARGE SCALE GENOMIC DNA]</scope>
    <source>
        <strain>ATCC VR-1525 / URRWXCal2</strain>
    </source>
</reference>
<organism>
    <name type="scientific">Rickettsia felis (strain ATCC VR-1525 / URRWXCal2)</name>
    <name type="common">Rickettsia azadi</name>
    <dbReference type="NCBI Taxonomy" id="315456"/>
    <lineage>
        <taxon>Bacteria</taxon>
        <taxon>Pseudomonadati</taxon>
        <taxon>Pseudomonadota</taxon>
        <taxon>Alphaproteobacteria</taxon>
        <taxon>Rickettsiales</taxon>
        <taxon>Rickettsiaceae</taxon>
        <taxon>Rickettsieae</taxon>
        <taxon>Rickettsia</taxon>
        <taxon>spotted fever group</taxon>
    </lineage>
</organism>